<reference key="1">
    <citation type="journal article" date="1996" name="Mol. Gen. Genet.">
        <title>Molecular and genetic characterization of SLC1, a putative Saccharomyces cerevisiae homolog of the metazoan cytoplasmic dynein light chain 1.</title>
        <authorList>
            <person name="Dick T."/>
            <person name="Surana U."/>
            <person name="Chia W."/>
        </authorList>
    </citation>
    <scope>NUCLEOTIDE SEQUENCE [MRNA]</scope>
</reference>
<reference key="2">
    <citation type="journal article" date="1997" name="Nature">
        <title>The nucleotide sequence of Saccharomyces cerevisiae chromosome IV.</title>
        <authorList>
            <person name="Jacq C."/>
            <person name="Alt-Moerbe J."/>
            <person name="Andre B."/>
            <person name="Arnold W."/>
            <person name="Bahr A."/>
            <person name="Ballesta J.P.G."/>
            <person name="Bargues M."/>
            <person name="Baron L."/>
            <person name="Becker A."/>
            <person name="Biteau N."/>
            <person name="Bloecker H."/>
            <person name="Blugeon C."/>
            <person name="Boskovic J."/>
            <person name="Brandt P."/>
            <person name="Brueckner M."/>
            <person name="Buitrago M.J."/>
            <person name="Coster F."/>
            <person name="Delaveau T."/>
            <person name="del Rey F."/>
            <person name="Dujon B."/>
            <person name="Eide L.G."/>
            <person name="Garcia-Cantalejo J.M."/>
            <person name="Goffeau A."/>
            <person name="Gomez-Peris A."/>
            <person name="Granotier C."/>
            <person name="Hanemann V."/>
            <person name="Hankeln T."/>
            <person name="Hoheisel J.D."/>
            <person name="Jaeger W."/>
            <person name="Jimenez A."/>
            <person name="Jonniaux J.-L."/>
            <person name="Kraemer C."/>
            <person name="Kuester H."/>
            <person name="Laamanen P."/>
            <person name="Legros Y."/>
            <person name="Louis E.J."/>
            <person name="Moeller-Rieker S."/>
            <person name="Monnet A."/>
            <person name="Moro M."/>
            <person name="Mueller-Auer S."/>
            <person name="Nussbaumer B."/>
            <person name="Paricio N."/>
            <person name="Paulin L."/>
            <person name="Perea J."/>
            <person name="Perez-Alonso M."/>
            <person name="Perez-Ortin J.E."/>
            <person name="Pohl T.M."/>
            <person name="Prydz H."/>
            <person name="Purnelle B."/>
            <person name="Rasmussen S.W."/>
            <person name="Remacha M.A."/>
            <person name="Revuelta J.L."/>
            <person name="Rieger M."/>
            <person name="Salom D."/>
            <person name="Saluz H.P."/>
            <person name="Saiz J.E."/>
            <person name="Saren A.-M."/>
            <person name="Schaefer M."/>
            <person name="Scharfe M."/>
            <person name="Schmidt E.R."/>
            <person name="Schneider C."/>
            <person name="Scholler P."/>
            <person name="Schwarz S."/>
            <person name="Soler-Mira A."/>
            <person name="Urrestarazu L.A."/>
            <person name="Verhasselt P."/>
            <person name="Vissers S."/>
            <person name="Voet M."/>
            <person name="Volckaert G."/>
            <person name="Wagner G."/>
            <person name="Wambutt R."/>
            <person name="Wedler E."/>
            <person name="Wedler H."/>
            <person name="Woelfl S."/>
            <person name="Harris D.E."/>
            <person name="Bowman S."/>
            <person name="Brown D."/>
            <person name="Churcher C.M."/>
            <person name="Connor R."/>
            <person name="Dedman K."/>
            <person name="Gentles S."/>
            <person name="Hamlin N."/>
            <person name="Hunt S."/>
            <person name="Jones L."/>
            <person name="McDonald S."/>
            <person name="Murphy L.D."/>
            <person name="Niblett D."/>
            <person name="Odell C."/>
            <person name="Oliver K."/>
            <person name="Rajandream M.A."/>
            <person name="Richards C."/>
            <person name="Shore L."/>
            <person name="Walsh S.V."/>
            <person name="Barrell B.G."/>
            <person name="Dietrich F.S."/>
            <person name="Mulligan J.T."/>
            <person name="Allen E."/>
            <person name="Araujo R."/>
            <person name="Aviles E."/>
            <person name="Berno A."/>
            <person name="Carpenter J."/>
            <person name="Chen E."/>
            <person name="Cherry J.M."/>
            <person name="Chung E."/>
            <person name="Duncan M."/>
            <person name="Hunicke-Smith S."/>
            <person name="Hyman R.W."/>
            <person name="Komp C."/>
            <person name="Lashkari D."/>
            <person name="Lew H."/>
            <person name="Lin D."/>
            <person name="Mosedale D."/>
            <person name="Nakahara K."/>
            <person name="Namath A."/>
            <person name="Oefner P."/>
            <person name="Oh C."/>
            <person name="Petel F.X."/>
            <person name="Roberts D."/>
            <person name="Schramm S."/>
            <person name="Schroeder M."/>
            <person name="Shogren T."/>
            <person name="Shroff N."/>
            <person name="Winant A."/>
            <person name="Yelton M.A."/>
            <person name="Botstein D."/>
            <person name="Davis R.W."/>
            <person name="Johnston M."/>
            <person name="Andrews S."/>
            <person name="Brinkman R."/>
            <person name="Cooper J."/>
            <person name="Ding H."/>
            <person name="Du Z."/>
            <person name="Favello A."/>
            <person name="Fulton L."/>
            <person name="Gattung S."/>
            <person name="Greco T."/>
            <person name="Hallsworth K."/>
            <person name="Hawkins J."/>
            <person name="Hillier L.W."/>
            <person name="Jier M."/>
            <person name="Johnson D."/>
            <person name="Johnston L."/>
            <person name="Kirsten J."/>
            <person name="Kucaba T."/>
            <person name="Langston Y."/>
            <person name="Latreille P."/>
            <person name="Le T."/>
            <person name="Mardis E."/>
            <person name="Menezes S."/>
            <person name="Miller N."/>
            <person name="Nhan M."/>
            <person name="Pauley A."/>
            <person name="Peluso D."/>
            <person name="Rifkin L."/>
            <person name="Riles L."/>
            <person name="Taich A."/>
            <person name="Trevaskis E."/>
            <person name="Vignati D."/>
            <person name="Wilcox L."/>
            <person name="Wohldman P."/>
            <person name="Vaudin M."/>
            <person name="Wilson R."/>
            <person name="Waterston R."/>
            <person name="Albermann K."/>
            <person name="Hani J."/>
            <person name="Heumann K."/>
            <person name="Kleine K."/>
            <person name="Mewes H.-W."/>
            <person name="Zollner A."/>
            <person name="Zaccaria P."/>
        </authorList>
    </citation>
    <scope>NUCLEOTIDE SEQUENCE [LARGE SCALE GENOMIC DNA]</scope>
    <source>
        <strain>ATCC 204508 / S288c</strain>
    </source>
</reference>
<reference key="3">
    <citation type="journal article" date="2014" name="G3 (Bethesda)">
        <title>The reference genome sequence of Saccharomyces cerevisiae: Then and now.</title>
        <authorList>
            <person name="Engel S.R."/>
            <person name="Dietrich F.S."/>
            <person name="Fisk D.G."/>
            <person name="Binkley G."/>
            <person name="Balakrishnan R."/>
            <person name="Costanzo M.C."/>
            <person name="Dwight S.S."/>
            <person name="Hitz B.C."/>
            <person name="Karra K."/>
            <person name="Nash R.S."/>
            <person name="Weng S."/>
            <person name="Wong E.D."/>
            <person name="Lloyd P."/>
            <person name="Skrzypek M.S."/>
            <person name="Miyasato S.R."/>
            <person name="Simison M."/>
            <person name="Cherry J.M."/>
        </authorList>
    </citation>
    <scope>GENOME REANNOTATION</scope>
    <source>
        <strain>ATCC 204508 / S288c</strain>
    </source>
</reference>
<reference key="4">
    <citation type="journal article" date="2003" name="Nature">
        <title>Global analysis of protein expression in yeast.</title>
        <authorList>
            <person name="Ghaemmaghami S."/>
            <person name="Huh W.-K."/>
            <person name="Bower K."/>
            <person name="Howson R.W."/>
            <person name="Belle A."/>
            <person name="Dephoure N."/>
            <person name="O'Shea E.K."/>
            <person name="Weissman J.S."/>
        </authorList>
    </citation>
    <scope>LEVEL OF PROTEIN EXPRESSION [LARGE SCALE ANALYSIS]</scope>
</reference>
<reference key="5">
    <citation type="journal article" date="2007" name="Nat. Cell Biol.">
        <title>Molecular basis for the functional interaction of dynein light chain with the nuclear-pore complex.</title>
        <authorList>
            <person name="Stelter P."/>
            <person name="Kunze R."/>
            <person name="Flemming D."/>
            <person name="Hoepfner D."/>
            <person name="Diepholz M."/>
            <person name="Philippsen P."/>
            <person name="Boettcher B."/>
            <person name="Hurt E."/>
        </authorList>
    </citation>
    <scope>IDENTIFICATION BY MASS SPECTROMETRY</scope>
    <scope>FUNCTION</scope>
    <scope>SUBUNIT</scope>
    <scope>IDENTIFICATION IN THE NUP82 NPC SUBCOMPLEX</scope>
    <scope>INTERACTION WITH NUP159</scope>
    <scope>SUBCELLULAR LOCATION</scope>
</reference>
<reference key="6">
    <citation type="journal article" date="2013" name="J. Biol. Chem.">
        <title>Multiple recognition motifs in nucleoporin Nup159 provide a stable and rigid Nup159-Dyn2 assembly.</title>
        <authorList>
            <person name="Nyarko A."/>
            <person name="Song Y."/>
            <person name="Novacek J."/>
            <person name="Zidek L."/>
            <person name="Barbar E."/>
        </authorList>
    </citation>
    <scope>FUNCTION</scope>
    <scope>SUBUNIT</scope>
    <scope>INTERACTION WITH NUP159</scope>
    <scope>SUBCELLULAR LOCATION</scope>
</reference>
<reference key="7">
    <citation type="journal article" date="2015" name="J. Cell Biol.">
        <title>Structural basis for assembly and function of the Nup82 complex in the nuclear pore scaffold.</title>
        <authorList>
            <person name="Gaik M."/>
            <person name="Flemming D."/>
            <person name="von Appen A."/>
            <person name="Kastritis P."/>
            <person name="Muecke N."/>
            <person name="Fischer J."/>
            <person name="Stelter P."/>
            <person name="Ori A."/>
            <person name="Bui K.H."/>
            <person name="Bassler J."/>
            <person name="Barbar E."/>
            <person name="Beck M."/>
            <person name="Hurt E."/>
        </authorList>
    </citation>
    <scope>FUNCTION</scope>
    <scope>SUBUNIT</scope>
    <scope>IDENTIFICATION IN THE NUP82 NPC SUBCOMPLEX</scope>
    <scope>INTERACTION WITH NUP159</scope>
    <scope>SUBCELLULAR LOCATION</scope>
</reference>
<proteinExistence type="evidence at protein level"/>
<comment type="function">
    <text evidence="1 3 4 5">Acts as one of several non-catalytic accessory components of the cytoplasmic dynein complex that are thought to be involved in linking dynein to cargos and to adapter proteins that regulate dynein function. Cytoplasmic dynein 1 acts as a motor for the intracellular retrograde motility of vesicles and organelles along microtubules. May play a role in changing or maintaining the spatial distribution of cytoskeletal structures (By similarity). Also a component of the nuclear pore complex where it may contribute to the stable association of the Nup82 subcomplex with the NPC (PubMed:17546040, PubMed:23223634, PubMed:25646085).</text>
</comment>
<comment type="subunit">
    <text evidence="3 4 5">Homodimer (PubMed:17546040, PubMed:23223634, PubMed:25646085). Cytoplasmic dynein consists of two catalytic heavy chains (HCs) and a number of non-catalytic subunits which present intermediate chains (ICs), light intermediate chains (LICs) and light chains (LCs). Component of the nuclear pore complex (NPC) (PubMed:17546040). NPC constitutes the exclusive means of nucleocytoplasmic transport. NPCs allow the passive diffusion of ions and small molecules and the active, nuclear transport receptor-mediated bidirectional transport of macromolecules such as proteins, RNAs, ribonucleoparticles (RNPs), and ribosomal subunits across the nuclear envelope. Due to its 8-fold rotational symmetry, all subunits are present with 8 copies or multiples thereof (PubMed:17546040). Part of the NUP82 subcomplex (PubMed:17546040, PubMed:23223634, PubMed:25646085). In the complex, interacts directly with Nup159 (PubMed:17546040, PubMed:23223634, PubMed:25646085).</text>
</comment>
<comment type="interaction">
    <interactant intactId="EBI-6240">
        <id>Q02647</id>
    </interactant>
    <interactant intactId="EBI-6230">
        <id>P36022</id>
        <label>DYN1</label>
    </interactant>
    <organismsDiffer>false</organismsDiffer>
    <experiments>3</experiments>
</comment>
<comment type="interaction">
    <interactant intactId="EBI-6240">
        <id>Q02647</id>
    </interactant>
    <interactant intactId="EBI-30551">
        <id>P40960</id>
        <label>PAC11</label>
    </interactant>
    <organismsDiffer>false</organismsDiffer>
    <experiments>4</experiments>
</comment>
<comment type="subcellular location">
    <subcellularLocation>
        <location>Cytoplasm</location>
        <location>Cytoskeleton</location>
    </subcellularLocation>
    <subcellularLocation>
        <location evidence="3 4 5">Nucleus</location>
        <location evidence="3 4 5">Nuclear pore complex</location>
    </subcellularLocation>
</comment>
<comment type="miscellaneous">
    <text evidence="2">Present with 1310 molecules/cell in log phase SD medium.</text>
</comment>
<comment type="similarity">
    <text evidence="6">Belongs to the dynein light chain family.</text>
</comment>
<name>DYL1_YEAST</name>
<feature type="chain" id="PRO_0000195149" description="Dynein light chain 1, cytoplasmic">
    <location>
        <begin position="1"/>
        <end position="92"/>
    </location>
</feature>
<feature type="strand" evidence="7">
    <location>
        <begin position="10"/>
        <end position="16"/>
    </location>
</feature>
<feature type="helix" evidence="7">
    <location>
        <begin position="18"/>
        <end position="34"/>
    </location>
</feature>
<feature type="helix" evidence="7">
    <location>
        <begin position="38"/>
        <end position="53"/>
    </location>
</feature>
<feature type="strand" evidence="7">
    <location>
        <begin position="57"/>
        <end position="71"/>
    </location>
</feature>
<feature type="strand" evidence="7">
    <location>
        <begin position="75"/>
        <end position="81"/>
    </location>
</feature>
<feature type="strand" evidence="7">
    <location>
        <begin position="84"/>
        <end position="90"/>
    </location>
</feature>
<sequence>MSDENKSTPIVKASDITDKLKEDILTISKDALDKYQLERDIAGTVKKQLDVKYGNTWHVIVGKNFGSYVTHEKGHFVYFYIGPLAFLVFKTA</sequence>
<dbReference type="EMBL" id="U36468">
    <property type="protein sequence ID" value="AAB03677.1"/>
    <property type="molecule type" value="mRNA"/>
</dbReference>
<dbReference type="EMBL" id="U33007">
    <property type="protein sequence ID" value="AAB64894.1"/>
    <property type="molecule type" value="Genomic_DNA"/>
</dbReference>
<dbReference type="EMBL" id="BK006938">
    <property type="protein sequence ID" value="DAA12264.1"/>
    <property type="molecule type" value="Genomic_DNA"/>
</dbReference>
<dbReference type="PIR" id="S66142">
    <property type="entry name" value="S66142"/>
</dbReference>
<dbReference type="RefSeq" id="NP_010712.1">
    <property type="nucleotide sequence ID" value="NM_001180732.1"/>
</dbReference>
<dbReference type="PDB" id="4DS1">
    <property type="method" value="X-ray"/>
    <property type="resolution" value="1.85 A"/>
    <property type="chains" value="A/C=1-92"/>
</dbReference>
<dbReference type="PDB" id="4HT6">
    <property type="method" value="X-ray"/>
    <property type="resolution" value="1.90 A"/>
    <property type="chains" value="A/C/E=1-92"/>
</dbReference>
<dbReference type="PDB" id="7N9F">
    <property type="method" value="EM"/>
    <property type="resolution" value="37.00 A"/>
    <property type="chains" value="o/p/q/r/s/t=1-92"/>
</dbReference>
<dbReference type="PDBsum" id="4DS1"/>
<dbReference type="PDBsum" id="4HT6"/>
<dbReference type="PDBsum" id="7N9F"/>
<dbReference type="EMDB" id="EMD-24258"/>
<dbReference type="SMR" id="Q02647"/>
<dbReference type="BioGRID" id="32483">
    <property type="interactions" value="154"/>
</dbReference>
<dbReference type="ComplexPortal" id="CPX-1178">
    <property type="entry name" value="Cytoplasmic dynein complex"/>
</dbReference>
<dbReference type="ComplexPortal" id="CPX-824">
    <property type="entry name" value="Nuclear pore complex"/>
</dbReference>
<dbReference type="DIP" id="DIP-6480N"/>
<dbReference type="FunCoup" id="Q02647">
    <property type="interactions" value="860"/>
</dbReference>
<dbReference type="IntAct" id="Q02647">
    <property type="interactions" value="12"/>
</dbReference>
<dbReference type="MINT" id="Q02647"/>
<dbReference type="STRING" id="4932.YDR424C"/>
<dbReference type="iPTMnet" id="Q02647"/>
<dbReference type="PaxDb" id="4932-YDR424C"/>
<dbReference type="PeptideAtlas" id="Q02647"/>
<dbReference type="EnsemblFungi" id="YDR424C_mRNA">
    <property type="protein sequence ID" value="YDR424C"/>
    <property type="gene ID" value="YDR424C"/>
</dbReference>
<dbReference type="GeneID" id="852034"/>
<dbReference type="KEGG" id="sce:YDR424C"/>
<dbReference type="AGR" id="SGD:S000002832"/>
<dbReference type="SGD" id="S000002832">
    <property type="gene designation" value="DYN2"/>
</dbReference>
<dbReference type="VEuPathDB" id="FungiDB:YDR424C"/>
<dbReference type="eggNOG" id="KOG3430">
    <property type="taxonomic scope" value="Eukaryota"/>
</dbReference>
<dbReference type="GeneTree" id="ENSGT00390000000378"/>
<dbReference type="HOGENOM" id="CLU_070944_4_0_1"/>
<dbReference type="InParanoid" id="Q02647"/>
<dbReference type="OMA" id="THEKGHF"/>
<dbReference type="OrthoDB" id="10033309at2759"/>
<dbReference type="BioCyc" id="YEAST:G3O-29965-MONOMER"/>
<dbReference type="Reactome" id="R-SCE-6798695">
    <property type="pathway name" value="Neutrophil degranulation"/>
</dbReference>
<dbReference type="BioGRID-ORCS" id="852034">
    <property type="hits" value="6 hits in 10 CRISPR screens"/>
</dbReference>
<dbReference type="EvolutionaryTrace" id="Q02647"/>
<dbReference type="PRO" id="PR:Q02647"/>
<dbReference type="Proteomes" id="UP000002311">
    <property type="component" value="Chromosome IV"/>
</dbReference>
<dbReference type="RNAct" id="Q02647">
    <property type="molecule type" value="protein"/>
</dbReference>
<dbReference type="GO" id="GO:0005737">
    <property type="term" value="C:cytoplasm"/>
    <property type="evidence" value="ECO:0000303"/>
    <property type="project" value="ComplexPortal"/>
</dbReference>
<dbReference type="GO" id="GO:0005868">
    <property type="term" value="C:cytoplasmic dynein complex"/>
    <property type="evidence" value="ECO:0000353"/>
    <property type="project" value="SGD"/>
</dbReference>
<dbReference type="GO" id="GO:0005881">
    <property type="term" value="C:cytoplasmic microtubule"/>
    <property type="evidence" value="ECO:0000314"/>
    <property type="project" value="SGD"/>
</dbReference>
<dbReference type="GO" id="GO:0005635">
    <property type="term" value="C:nuclear envelope"/>
    <property type="evidence" value="ECO:0000303"/>
    <property type="project" value="ComplexPortal"/>
</dbReference>
<dbReference type="GO" id="GO:0034399">
    <property type="term" value="C:nuclear periphery"/>
    <property type="evidence" value="ECO:0007005"/>
    <property type="project" value="SGD"/>
</dbReference>
<dbReference type="GO" id="GO:0005643">
    <property type="term" value="C:nuclear pore"/>
    <property type="evidence" value="ECO:0000303"/>
    <property type="project" value="ComplexPortal"/>
</dbReference>
<dbReference type="GO" id="GO:1990429">
    <property type="term" value="C:peroxisomal importomer complex"/>
    <property type="evidence" value="ECO:0000314"/>
    <property type="project" value="SGD"/>
</dbReference>
<dbReference type="GO" id="GO:0045505">
    <property type="term" value="F:dynein intermediate chain binding"/>
    <property type="evidence" value="ECO:0000318"/>
    <property type="project" value="GO_Central"/>
</dbReference>
<dbReference type="GO" id="GO:0040001">
    <property type="term" value="P:establishment of mitotic spindle localization"/>
    <property type="evidence" value="ECO:0000315"/>
    <property type="project" value="SGD"/>
</dbReference>
<dbReference type="GO" id="GO:0000132">
    <property type="term" value="P:establishment of mitotic spindle orientation"/>
    <property type="evidence" value="ECO:0000303"/>
    <property type="project" value="ComplexPortal"/>
</dbReference>
<dbReference type="GO" id="GO:0051028">
    <property type="term" value="P:mRNA transport"/>
    <property type="evidence" value="ECO:0007669"/>
    <property type="project" value="UniProtKB-KW"/>
</dbReference>
<dbReference type="GO" id="GO:0030473">
    <property type="term" value="P:nuclear migration along microtubule"/>
    <property type="evidence" value="ECO:0000315"/>
    <property type="project" value="SGD"/>
</dbReference>
<dbReference type="GO" id="GO:0051292">
    <property type="term" value="P:nuclear pore complex assembly"/>
    <property type="evidence" value="ECO:0000315"/>
    <property type="project" value="SGD"/>
</dbReference>
<dbReference type="GO" id="GO:0006913">
    <property type="term" value="P:nucleocytoplasmic transport"/>
    <property type="evidence" value="ECO:0000303"/>
    <property type="project" value="ComplexPortal"/>
</dbReference>
<dbReference type="GO" id="GO:0015031">
    <property type="term" value="P:protein transport"/>
    <property type="evidence" value="ECO:0007669"/>
    <property type="project" value="UniProtKB-KW"/>
</dbReference>
<dbReference type="CDD" id="cd21452">
    <property type="entry name" value="DLC-like_DYNLL1_DYNLL2"/>
    <property type="match status" value="1"/>
</dbReference>
<dbReference type="FunFam" id="3.30.740.10:FF:000005">
    <property type="entry name" value="Dynein light chain"/>
    <property type="match status" value="1"/>
</dbReference>
<dbReference type="Gene3D" id="3.30.740.10">
    <property type="entry name" value="Protein Inhibitor Of Neuronal Nitric Oxide Synthase"/>
    <property type="match status" value="1"/>
</dbReference>
<dbReference type="InterPro" id="IPR037177">
    <property type="entry name" value="DLC_sf"/>
</dbReference>
<dbReference type="InterPro" id="IPR019763">
    <property type="entry name" value="Dynein_light_1/2_CS"/>
</dbReference>
<dbReference type="InterPro" id="IPR001372">
    <property type="entry name" value="Dynein_light_chain_typ-1/2"/>
</dbReference>
<dbReference type="PANTHER" id="PTHR11886">
    <property type="entry name" value="DYNEIN LIGHT CHAIN"/>
    <property type="match status" value="1"/>
</dbReference>
<dbReference type="PANTHER" id="PTHR11886:SF35">
    <property type="entry name" value="DYNEIN LIGHT CHAIN"/>
    <property type="match status" value="1"/>
</dbReference>
<dbReference type="Pfam" id="PF01221">
    <property type="entry name" value="Dynein_light"/>
    <property type="match status" value="1"/>
</dbReference>
<dbReference type="SMART" id="SM01375">
    <property type="entry name" value="Dynein_light"/>
    <property type="match status" value="1"/>
</dbReference>
<dbReference type="SUPFAM" id="SSF54648">
    <property type="entry name" value="DLC"/>
    <property type="match status" value="1"/>
</dbReference>
<dbReference type="PROSITE" id="PS01239">
    <property type="entry name" value="DYNEIN_LIGHT_1"/>
    <property type="match status" value="1"/>
</dbReference>
<organism>
    <name type="scientific">Saccharomyces cerevisiae (strain ATCC 204508 / S288c)</name>
    <name type="common">Baker's yeast</name>
    <dbReference type="NCBI Taxonomy" id="559292"/>
    <lineage>
        <taxon>Eukaryota</taxon>
        <taxon>Fungi</taxon>
        <taxon>Dikarya</taxon>
        <taxon>Ascomycota</taxon>
        <taxon>Saccharomycotina</taxon>
        <taxon>Saccharomycetes</taxon>
        <taxon>Saccharomycetales</taxon>
        <taxon>Saccharomycetaceae</taxon>
        <taxon>Saccharomyces</taxon>
    </lineage>
</organism>
<accession>Q02647</accession>
<accession>D6VT54</accession>
<keyword id="KW-0002">3D-structure</keyword>
<keyword id="KW-0963">Cytoplasm</keyword>
<keyword id="KW-0206">Cytoskeleton</keyword>
<keyword id="KW-0243">Dynein</keyword>
<keyword id="KW-0493">Microtubule</keyword>
<keyword id="KW-0505">Motor protein</keyword>
<keyword id="KW-0509">mRNA transport</keyword>
<keyword id="KW-0906">Nuclear pore complex</keyword>
<keyword id="KW-0539">Nucleus</keyword>
<keyword id="KW-0653">Protein transport</keyword>
<keyword id="KW-1185">Reference proteome</keyword>
<keyword id="KW-0811">Translocation</keyword>
<keyword id="KW-0813">Transport</keyword>
<gene>
    <name type="primary">DYN2</name>
    <name type="synonym">SLC1</name>
    <name type="ordered locus">YDR424C</name>
</gene>
<protein>
    <recommendedName>
        <fullName>Dynein light chain 1, cytoplasmic</fullName>
    </recommendedName>
</protein>
<evidence type="ECO:0000250" key="1"/>
<evidence type="ECO:0000269" key="2">
    <source>
    </source>
</evidence>
<evidence type="ECO:0000269" key="3">
    <source>
    </source>
</evidence>
<evidence type="ECO:0000269" key="4">
    <source>
    </source>
</evidence>
<evidence type="ECO:0000269" key="5">
    <source>
    </source>
</evidence>
<evidence type="ECO:0000305" key="6"/>
<evidence type="ECO:0007829" key="7">
    <source>
        <dbReference type="PDB" id="4DS1"/>
    </source>
</evidence>